<gene>
    <name evidence="3 4" type="primary">pylD</name>
    <name evidence="8" type="ordered locus">Mbar_A0835</name>
</gene>
<reference key="1">
    <citation type="journal article" date="2006" name="J. Bacteriol.">
        <title>The Methanosarcina barkeri genome: comparative analysis with Methanosarcina acetivorans and Methanosarcina mazei reveals extensive rearrangement within methanosarcinal genomes.</title>
        <authorList>
            <person name="Maeder D.L."/>
            <person name="Anderson I."/>
            <person name="Brettin T.S."/>
            <person name="Bruce D.C."/>
            <person name="Gilna P."/>
            <person name="Han C.S."/>
            <person name="Lapidus A."/>
            <person name="Metcalf W.W."/>
            <person name="Saunders E."/>
            <person name="Tapia R."/>
            <person name="Sowers K.R."/>
        </authorList>
    </citation>
    <scope>NUCLEOTIDE SEQUENCE [LARGE SCALE GENOMIC DNA]</scope>
    <source>
        <strain>Fusaro / DSM 804</strain>
    </source>
</reference>
<reference evidence="9 10 11 12 13" key="2">
    <citation type="journal article" date="2013" name="Angew. Chem. Int. Ed.">
        <title>Structure and reaction mechanism of pyrrolysine synthase (PylD).</title>
        <authorList>
            <person name="Quitterer F."/>
            <person name="Beck P."/>
            <person name="Bacher A."/>
            <person name="Groll M."/>
        </authorList>
    </citation>
    <scope>X-RAY CRYSTALLOGRAPHY (1.80 ANGSTROMS) OF 5-263 IN COMPLEXES WITH NAD(+); NADH; (3R)-D-ORNITHYL-N(6)-L-LYSINE AND PYRROLYSINE ANALOG</scope>
    <scope>FUNCTION</scope>
    <scope>REACTION MECHANISM</scope>
    <source>
        <strain>Fusaro / DSM 804</strain>
    </source>
</reference>
<reference evidence="14 15 16 17 18 19" key="3">
    <citation type="journal article" date="2014" name="Angew. Chem. Int. Ed.">
        <title>The formation of pyrroline and tetrahydropyridine rings in amino acids catalyzed by pyrrolysine synthase (PylD).</title>
        <authorList>
            <person name="Quitterer F."/>
            <person name="Beck P."/>
            <person name="Bacher A."/>
            <person name="Groll M."/>
        </authorList>
    </citation>
    <scope>X-RAY CRYSTALLOGRAPHY (1.90 ANGSTROMS) OF 5-263 IN COMPLEXES WITH NAD(+); NADH; PYRROLYSINE AND SEVERAL SUBSTRATE OR PRODUCT ANALOGS</scope>
    <scope>FUNCTION</scope>
    <scope>CATALYTIC ACTIVITY</scope>
    <scope>BIOPHYSICOCHEMICAL PROPERTIES</scope>
    <scope>REACTION MECHANISM</scope>
    <source>
        <strain>Fusaro / DSM 804</strain>
    </source>
</reference>
<sequence length="263" mass="28299">MAIKMALLTPDDLININMQLQKADSAVQEVTGLDIKGICKALYGTFSSSEKVGIVPVTSGNGIIGNFSASLHAITQYFGFDSFVTDMPDVSGYYEAVQNGAEIILMADDRTFLAHNLKNGKMANNQPCTGIIYAEIASRYLKADSKDVLVVGLGKVGFPGAEHLVQKDFRVYGYDADETLLERATSNLGIIPFDPANPKKFSIIFEATPCANTIPEAVLSENCVLSTPGIPCAISEELRDKYEVQLIAEPLGIGTASMLYSVL</sequence>
<name>PYLD_METBF</name>
<keyword id="KW-0002">3D-structure</keyword>
<keyword id="KW-0028">Amino-acid biosynthesis</keyword>
<keyword id="KW-0520">NAD</keyword>
<keyword id="KW-0560">Oxidoreductase</keyword>
<protein>
    <recommendedName>
        <fullName evidence="3 4">Pyrrolysine synthase</fullName>
        <ecNumber evidence="2">1.4.1.-</ecNumber>
    </recommendedName>
</protein>
<comment type="function">
    <text evidence="1 2">Catalyzes the ultimate step of the pyrrolysine biosynthesis pathway by converting the isopeptide (3R)-3-methyl-D-ornithyl-N(6)-L-lysine to the 22nd proteinogenic amino acid (PubMed:24916332). Is able to use surrogate substrates such as (3R)-D-ornithyl-N(6)-L-lysine in vitro (PubMed:23720358, PubMed:24916332).</text>
</comment>
<comment type="catalytic activity">
    <reaction evidence="2">
        <text>(3R)-3-methyl-D-ornithyl-N(6)-L-lysine + NAD(+) = L-pyrrolysine + NH4(+) + NADH + 2 H(+)</text>
        <dbReference type="Rhea" id="RHEA:79083"/>
        <dbReference type="ChEBI" id="CHEBI:15378"/>
        <dbReference type="ChEBI" id="CHEBI:28938"/>
        <dbReference type="ChEBI" id="CHEBI:57540"/>
        <dbReference type="ChEBI" id="CHEBI:57945"/>
        <dbReference type="ChEBI" id="CHEBI:58499"/>
        <dbReference type="ChEBI" id="CHEBI:64643"/>
    </reaction>
    <physiologicalReaction direction="left-to-right" evidence="7">
        <dbReference type="Rhea" id="RHEA:79084"/>
    </physiologicalReaction>
</comment>
<comment type="biophysicochemical properties">
    <kinetics>
        <KM evidence="2">1.6 mM for (3R)-3-methyl-D-ornithyl-N(6)-L-lysine</KM>
        <KM evidence="1">3.6 mM for (3R)-D-ornithyl-N(6)-L-lysine</KM>
        <text evidence="1 2">kcat is 1.72 sec(-1) with the natural substrate (3R)-3-methyl-D-ornithyl-N(6)-L-lysine (PubMed:24916332). kcat is 0.76 sec(-1) with the surrogate substrate (3R)-D-ornithyl-N(6)-L-lysine (PubMed:23720358).</text>
    </kinetics>
</comment>
<comment type="pathway">
    <text evidence="6 7">Amino-acid biosynthesis; L-pyrrolysine biosynthesis.</text>
</comment>
<comment type="similarity">
    <text evidence="5">Belongs to the PylD family.</text>
</comment>
<accession>Q46E80</accession>
<evidence type="ECO:0000269" key="1">
    <source>
    </source>
</evidence>
<evidence type="ECO:0000269" key="2">
    <source>
    </source>
</evidence>
<evidence type="ECO:0000303" key="3">
    <source>
    </source>
</evidence>
<evidence type="ECO:0000303" key="4">
    <source>
    </source>
</evidence>
<evidence type="ECO:0000305" key="5"/>
<evidence type="ECO:0000305" key="6">
    <source>
    </source>
</evidence>
<evidence type="ECO:0000305" key="7">
    <source>
    </source>
</evidence>
<evidence type="ECO:0000312" key="8">
    <source>
        <dbReference type="EMBL" id="AAZ69812.1"/>
    </source>
</evidence>
<evidence type="ECO:0007744" key="9">
    <source>
        <dbReference type="PDB" id="4J43"/>
    </source>
</evidence>
<evidence type="ECO:0007744" key="10">
    <source>
        <dbReference type="PDB" id="4J49"/>
    </source>
</evidence>
<evidence type="ECO:0007744" key="11">
    <source>
        <dbReference type="PDB" id="4J4B"/>
    </source>
</evidence>
<evidence type="ECO:0007744" key="12">
    <source>
        <dbReference type="PDB" id="4J4H"/>
    </source>
</evidence>
<evidence type="ECO:0007744" key="13">
    <source>
        <dbReference type="PDB" id="4JK3"/>
    </source>
</evidence>
<evidence type="ECO:0007744" key="14">
    <source>
        <dbReference type="PDB" id="4Q39"/>
    </source>
</evidence>
<evidence type="ECO:0007744" key="15">
    <source>
        <dbReference type="PDB" id="4Q3A"/>
    </source>
</evidence>
<evidence type="ECO:0007744" key="16">
    <source>
        <dbReference type="PDB" id="4Q3B"/>
    </source>
</evidence>
<evidence type="ECO:0007744" key="17">
    <source>
        <dbReference type="PDB" id="4Q3C"/>
    </source>
</evidence>
<evidence type="ECO:0007744" key="18">
    <source>
        <dbReference type="PDB" id="4Q3D"/>
    </source>
</evidence>
<evidence type="ECO:0007744" key="19">
    <source>
        <dbReference type="PDB" id="4Q3E"/>
    </source>
</evidence>
<evidence type="ECO:0007829" key="20">
    <source>
        <dbReference type="PDB" id="4J49"/>
    </source>
</evidence>
<evidence type="ECO:0007829" key="21">
    <source>
        <dbReference type="PDB" id="4J4B"/>
    </source>
</evidence>
<evidence type="ECO:0007829" key="22">
    <source>
        <dbReference type="PDB" id="4J4H"/>
    </source>
</evidence>
<dbReference type="EC" id="1.4.1.-" evidence="2"/>
<dbReference type="EMBL" id="CP000099">
    <property type="protein sequence ID" value="AAZ69812.1"/>
    <property type="molecule type" value="Genomic_DNA"/>
</dbReference>
<dbReference type="PDB" id="4J43">
    <property type="method" value="X-ray"/>
    <property type="resolution" value="2.20 A"/>
    <property type="chains" value="A/B=5-263"/>
</dbReference>
<dbReference type="PDB" id="4J49">
    <property type="method" value="X-ray"/>
    <property type="resolution" value="2.20 A"/>
    <property type="chains" value="A/B=5-263"/>
</dbReference>
<dbReference type="PDB" id="4J4B">
    <property type="method" value="X-ray"/>
    <property type="resolution" value="1.90 A"/>
    <property type="chains" value="A/B=5-263"/>
</dbReference>
<dbReference type="PDB" id="4J4H">
    <property type="method" value="X-ray"/>
    <property type="resolution" value="1.80 A"/>
    <property type="chains" value="A/B/C/D=5-263"/>
</dbReference>
<dbReference type="PDB" id="4JK3">
    <property type="method" value="X-ray"/>
    <property type="resolution" value="2.50 A"/>
    <property type="chains" value="A/B=5-263"/>
</dbReference>
<dbReference type="PDB" id="4Q39">
    <property type="method" value="X-ray"/>
    <property type="resolution" value="2.20 A"/>
    <property type="chains" value="A/B=5-263"/>
</dbReference>
<dbReference type="PDB" id="4Q3A">
    <property type="method" value="X-ray"/>
    <property type="resolution" value="2.20 A"/>
    <property type="chains" value="A/B/C/D=5-263"/>
</dbReference>
<dbReference type="PDB" id="4Q3B">
    <property type="method" value="X-ray"/>
    <property type="resolution" value="1.90 A"/>
    <property type="chains" value="A/B/C/D=5-263"/>
</dbReference>
<dbReference type="PDB" id="4Q3C">
    <property type="method" value="X-ray"/>
    <property type="resolution" value="2.10 A"/>
    <property type="chains" value="A/B/C/D=5-263"/>
</dbReference>
<dbReference type="PDB" id="4Q3D">
    <property type="method" value="X-ray"/>
    <property type="resolution" value="2.20 A"/>
    <property type="chains" value="A/B/C/D=5-263"/>
</dbReference>
<dbReference type="PDB" id="4Q3E">
    <property type="method" value="X-ray"/>
    <property type="resolution" value="2.20 A"/>
    <property type="chains" value="A/B=5-263"/>
</dbReference>
<dbReference type="PDBsum" id="4J43"/>
<dbReference type="PDBsum" id="4J49"/>
<dbReference type="PDBsum" id="4J4B"/>
<dbReference type="PDBsum" id="4J4H"/>
<dbReference type="PDBsum" id="4JK3"/>
<dbReference type="PDBsum" id="4Q39"/>
<dbReference type="PDBsum" id="4Q3A"/>
<dbReference type="PDBsum" id="4Q3B"/>
<dbReference type="PDBsum" id="4Q3C"/>
<dbReference type="PDBsum" id="4Q3D"/>
<dbReference type="PDBsum" id="4Q3E"/>
<dbReference type="SMR" id="Q46E80"/>
<dbReference type="STRING" id="269797.Mbar_A0835"/>
<dbReference type="PaxDb" id="269797-Mbar_A0835"/>
<dbReference type="KEGG" id="mba:Mbar_A0835"/>
<dbReference type="eggNOG" id="arCOG05004">
    <property type="taxonomic scope" value="Archaea"/>
</dbReference>
<dbReference type="HOGENOM" id="CLU_089249_0_0_2"/>
<dbReference type="OrthoDB" id="122788at2157"/>
<dbReference type="BioCyc" id="MetaCyc:MONOMER-17158"/>
<dbReference type="UniPathway" id="UPA01028"/>
<dbReference type="EvolutionaryTrace" id="Q46E80"/>
<dbReference type="GO" id="GO:0016491">
    <property type="term" value="F:oxidoreductase activity"/>
    <property type="evidence" value="ECO:0007669"/>
    <property type="project" value="UniProtKB-KW"/>
</dbReference>
<dbReference type="GO" id="GO:0008652">
    <property type="term" value="P:amino acid biosynthetic process"/>
    <property type="evidence" value="ECO:0007669"/>
    <property type="project" value="UniProtKB-KW"/>
</dbReference>
<dbReference type="Gene3D" id="3.40.50.12150">
    <property type="match status" value="1"/>
</dbReference>
<dbReference type="Gene3D" id="3.40.50.720">
    <property type="entry name" value="NAD(P)-binding Rossmann-like Domain"/>
    <property type="match status" value="1"/>
</dbReference>
<dbReference type="InterPro" id="IPR036291">
    <property type="entry name" value="NAD(P)-bd_dom_sf"/>
</dbReference>
<dbReference type="InterPro" id="IPR048757">
    <property type="entry name" value="PylD_N"/>
</dbReference>
<dbReference type="InterPro" id="IPR023914">
    <property type="entry name" value="Pyrrolys_PylD"/>
</dbReference>
<dbReference type="NCBIfam" id="TIGR03911">
    <property type="entry name" value="pyrrolys_PylD"/>
    <property type="match status" value="1"/>
</dbReference>
<dbReference type="Pfam" id="PF21455">
    <property type="entry name" value="PylD_N"/>
    <property type="match status" value="1"/>
</dbReference>
<dbReference type="SUPFAM" id="SSF51735">
    <property type="entry name" value="NAD(P)-binding Rossmann-fold domains"/>
    <property type="match status" value="1"/>
</dbReference>
<organism>
    <name type="scientific">Methanosarcina barkeri (strain Fusaro / DSM 804)</name>
    <dbReference type="NCBI Taxonomy" id="269797"/>
    <lineage>
        <taxon>Archaea</taxon>
        <taxon>Methanobacteriati</taxon>
        <taxon>Methanobacteriota</taxon>
        <taxon>Stenosarchaea group</taxon>
        <taxon>Methanomicrobia</taxon>
        <taxon>Methanosarcinales</taxon>
        <taxon>Methanosarcinaceae</taxon>
        <taxon>Methanosarcina</taxon>
    </lineage>
</organism>
<proteinExistence type="evidence at protein level"/>
<feature type="chain" id="PRO_0000460473" description="Pyrrolysine synthase">
    <location>
        <begin position="1"/>
        <end position="263"/>
    </location>
</feature>
<feature type="binding site" evidence="2 14">
    <location>
        <position position="8"/>
    </location>
    <ligand>
        <name>L-pyrrolysine</name>
        <dbReference type="ChEBI" id="CHEBI:58499"/>
    </ligand>
</feature>
<feature type="binding site" evidence="2 14">
    <location>
        <position position="57"/>
    </location>
    <ligand>
        <name>L-pyrrolysine</name>
        <dbReference type="ChEBI" id="CHEBI:58499"/>
    </ligand>
</feature>
<feature type="binding site" evidence="2 14">
    <location>
        <position position="64"/>
    </location>
    <ligand>
        <name>L-pyrrolysine</name>
        <dbReference type="ChEBI" id="CHEBI:58499"/>
    </ligand>
</feature>
<feature type="binding site" evidence="2 14">
    <location>
        <position position="107"/>
    </location>
    <ligand>
        <name>L-pyrrolysine</name>
        <dbReference type="ChEBI" id="CHEBI:58499"/>
    </ligand>
</feature>
<feature type="binding site" evidence="1 2 13 18">
    <location>
        <position position="155"/>
    </location>
    <ligand>
        <name>NAD(+)</name>
        <dbReference type="ChEBI" id="CHEBI:57540"/>
    </ligand>
</feature>
<feature type="binding site" evidence="1 2 13 18">
    <location>
        <position position="156"/>
    </location>
    <ligand>
        <name>NAD(+)</name>
        <dbReference type="ChEBI" id="CHEBI:57540"/>
    </ligand>
</feature>
<feature type="binding site" evidence="1 2 13 18">
    <location>
        <position position="175"/>
    </location>
    <ligand>
        <name>NAD(+)</name>
        <dbReference type="ChEBI" id="CHEBI:57540"/>
    </ligand>
</feature>
<feature type="binding site" evidence="1 2 13 18">
    <location>
        <position position="210"/>
    </location>
    <ligand>
        <name>NAD(+)</name>
        <dbReference type="ChEBI" id="CHEBI:57540"/>
    </ligand>
</feature>
<feature type="binding site" evidence="1 2 13 18">
    <location>
        <position position="228"/>
    </location>
    <ligand>
        <name>NAD(+)</name>
        <dbReference type="ChEBI" id="CHEBI:57540"/>
    </ligand>
</feature>
<feature type="binding site" evidence="1 2 13 18">
    <location>
        <position position="230"/>
    </location>
    <ligand>
        <name>NAD(+)</name>
        <dbReference type="ChEBI" id="CHEBI:57540"/>
    </ligand>
</feature>
<feature type="binding site" evidence="1 2 13 18">
    <location>
        <position position="249"/>
    </location>
    <ligand>
        <name>NAD(+)</name>
        <dbReference type="ChEBI" id="CHEBI:57540"/>
    </ligand>
</feature>
<feature type="helix" evidence="22">
    <location>
        <begin position="10"/>
        <end position="13"/>
    </location>
</feature>
<feature type="helix" evidence="22">
    <location>
        <begin position="16"/>
        <end position="31"/>
    </location>
</feature>
<feature type="helix" evidence="22">
    <location>
        <begin position="35"/>
        <end position="43"/>
    </location>
</feature>
<feature type="strand" evidence="22">
    <location>
        <begin position="51"/>
        <end position="54"/>
    </location>
</feature>
<feature type="strand" evidence="20">
    <location>
        <begin position="60"/>
        <end position="63"/>
    </location>
</feature>
<feature type="helix" evidence="22">
    <location>
        <begin position="67"/>
        <end position="77"/>
    </location>
</feature>
<feature type="strand" evidence="22">
    <location>
        <begin position="81"/>
        <end position="84"/>
    </location>
</feature>
<feature type="helix" evidence="22">
    <location>
        <begin position="89"/>
        <end position="98"/>
    </location>
</feature>
<feature type="strand" evidence="22">
    <location>
        <begin position="102"/>
        <end position="107"/>
    </location>
</feature>
<feature type="strand" evidence="22">
    <location>
        <begin position="112"/>
        <end position="116"/>
    </location>
</feature>
<feature type="turn" evidence="22">
    <location>
        <begin position="117"/>
        <end position="119"/>
    </location>
</feature>
<feature type="strand" evidence="22">
    <location>
        <begin position="122"/>
        <end position="124"/>
    </location>
</feature>
<feature type="helix" evidence="22">
    <location>
        <begin position="125"/>
        <end position="138"/>
    </location>
</feature>
<feature type="strand" evidence="22">
    <location>
        <begin position="147"/>
        <end position="151"/>
    </location>
</feature>
<feature type="helix" evidence="22">
    <location>
        <begin position="157"/>
        <end position="166"/>
    </location>
</feature>
<feature type="strand" evidence="22">
    <location>
        <begin position="170"/>
        <end position="174"/>
    </location>
</feature>
<feature type="helix" evidence="22">
    <location>
        <begin position="178"/>
        <end position="188"/>
    </location>
</feature>
<feature type="strand" evidence="22">
    <location>
        <begin position="201"/>
        <end position="206"/>
    </location>
</feature>
<feature type="strand" evidence="22">
    <location>
        <begin position="209"/>
        <end position="212"/>
    </location>
</feature>
<feature type="helix" evidence="22">
    <location>
        <begin position="216"/>
        <end position="218"/>
    </location>
</feature>
<feature type="strand" evidence="22">
    <location>
        <begin position="219"/>
        <end position="226"/>
    </location>
</feature>
<feature type="strand" evidence="21">
    <location>
        <begin position="229"/>
        <end position="231"/>
    </location>
</feature>
<feature type="helix" evidence="22">
    <location>
        <begin position="236"/>
        <end position="241"/>
    </location>
</feature>
<feature type="strand" evidence="22">
    <location>
        <begin position="245"/>
        <end position="247"/>
    </location>
</feature>
<feature type="helix" evidence="22">
    <location>
        <begin position="252"/>
        <end position="261"/>
    </location>
</feature>